<keyword id="KW-1035">Host cytoplasm</keyword>
<keyword id="KW-0945">Host-virus interaction</keyword>
<keyword id="KW-1090">Inhibition of host innate immune response by virus</keyword>
<keyword id="KW-1114">Inhibition of host interferon signaling pathway by virus</keyword>
<keyword id="KW-1089">Inhibition of host MDA5 by virus</keyword>
<keyword id="KW-1113">Inhibition of host RLR pathway by virus</keyword>
<keyword id="KW-1105">Inhibition of host STAT1 by virus</keyword>
<keyword id="KW-1106">Inhibition of host STAT2 by virus</keyword>
<keyword id="KW-0922">Interferon antiviral system evasion</keyword>
<keyword id="KW-0479">Metal-binding</keyword>
<keyword id="KW-0691">RNA editing</keyword>
<keyword id="KW-0899">Viral immunoevasion</keyword>
<keyword id="KW-0862">Zinc</keyword>
<dbReference type="EMBL" id="S44819">
    <property type="status" value="NOT_ANNOTATED_CDS"/>
    <property type="molecule type" value="mRNA"/>
</dbReference>
<dbReference type="SMR" id="P60169"/>
<dbReference type="GO" id="GO:0030430">
    <property type="term" value="C:host cell cytoplasm"/>
    <property type="evidence" value="ECO:0007669"/>
    <property type="project" value="UniProtKB-SubCell"/>
</dbReference>
<dbReference type="GO" id="GO:0046872">
    <property type="term" value="F:metal ion binding"/>
    <property type="evidence" value="ECO:0007669"/>
    <property type="project" value="UniProtKB-KW"/>
</dbReference>
<dbReference type="GO" id="GO:0039554">
    <property type="term" value="P:symbiont-mediated suppression of host cytoplasmic pattern recognition receptor signaling pathway via inhibition of MDA-5 activity"/>
    <property type="evidence" value="ECO:0007669"/>
    <property type="project" value="UniProtKB-KW"/>
</dbReference>
<dbReference type="GO" id="GO:0039563">
    <property type="term" value="P:symbiont-mediated suppression of host JAK-STAT cascade via inhibition of STAT1 activity"/>
    <property type="evidence" value="ECO:0007669"/>
    <property type="project" value="UniProtKB-KW"/>
</dbReference>
<dbReference type="GO" id="GO:0039564">
    <property type="term" value="P:symbiont-mediated suppression of host JAK-STAT cascade via inhibition of STAT2 activity"/>
    <property type="evidence" value="ECO:0007669"/>
    <property type="project" value="UniProtKB-KW"/>
</dbReference>
<dbReference type="GO" id="GO:0039502">
    <property type="term" value="P:symbiont-mediated suppression of host type I interferon-mediated signaling pathway"/>
    <property type="evidence" value="ECO:0007669"/>
    <property type="project" value="UniProtKB-KW"/>
</dbReference>
<dbReference type="Gene3D" id="4.10.80.340">
    <property type="match status" value="1"/>
</dbReference>
<dbReference type="InterPro" id="IPR024279">
    <property type="entry name" value="Paramyx_V_Zn-bd"/>
</dbReference>
<dbReference type="InterPro" id="IPR028243">
    <property type="entry name" value="Paramyxo_P/V_N"/>
</dbReference>
<dbReference type="Pfam" id="PF13825">
    <property type="entry name" value="Paramyxo_P_V_N"/>
    <property type="match status" value="1"/>
</dbReference>
<dbReference type="Pfam" id="PF13008">
    <property type="entry name" value="zf-Paramyx-P"/>
    <property type="match status" value="1"/>
</dbReference>
<reference key="1">
    <citation type="journal article" date="1992" name="Virology">
        <title>Sequence analysis and editing of the phosphoprotein (P) gene of rinderpest virus.</title>
        <authorList>
            <person name="Yamanaka M."/>
            <person name="Dale B."/>
            <person name="Crisp T."/>
            <person name="Cordell B."/>
            <person name="Grubman M."/>
            <person name="Yilma T."/>
        </authorList>
    </citation>
    <scope>NUCLEOTIDE SEQUENCE [MRNA]</scope>
</reference>
<reference key="2">
    <citation type="journal article" date="2013" name="PLoS ONE">
        <title>Morbillivirus v proteins exhibit multiple mechanisms to block type 1 and type 2 interferon signalling pathways.</title>
        <authorList>
            <person name="Chinnakannan S.K."/>
            <person name="Nanda S.K."/>
            <person name="Baron M.D."/>
        </authorList>
    </citation>
    <scope>FUNCTION</scope>
</reference>
<organism>
    <name type="scientific">Rinderpest virus (strain Kabete O)</name>
    <name type="common">RDV</name>
    <dbReference type="NCBI Taxonomy" id="11242"/>
    <lineage>
        <taxon>Viruses</taxon>
        <taxon>Riboviria</taxon>
        <taxon>Orthornavirae</taxon>
        <taxon>Negarnaviricota</taxon>
        <taxon>Haploviricotina</taxon>
        <taxon>Monjiviricetes</taxon>
        <taxon>Mononegavirales</taxon>
        <taxon>Paramyxoviridae</taxon>
        <taxon>Orthoparamyxovirinae</taxon>
        <taxon>Morbillivirus</taxon>
        <taxon>Morbillivirus pecoris</taxon>
        <taxon>Rinderpest morbillivirus</taxon>
    </lineage>
</organism>
<evidence type="ECO:0000250" key="1"/>
<evidence type="ECO:0000256" key="2">
    <source>
        <dbReference type="SAM" id="MobiDB-lite"/>
    </source>
</evidence>
<evidence type="ECO:0000269" key="3">
    <source>
    </source>
</evidence>
<evidence type="ECO:0000305" key="4"/>
<gene>
    <name type="primary">P/V</name>
</gene>
<proteinExistence type="evidence at transcript level"/>
<feature type="chain" id="PRO_0000142823" description="Non-structural protein V">
    <location>
        <begin position="1"/>
        <end position="299"/>
    </location>
</feature>
<feature type="region of interest" description="Disordered" evidence="2">
    <location>
        <begin position="137"/>
        <end position="186"/>
    </location>
</feature>
<feature type="region of interest" description="Disordered" evidence="2">
    <location>
        <begin position="205"/>
        <end position="229"/>
    </location>
</feature>
<feature type="compositionally biased region" description="Acidic residues" evidence="2">
    <location>
        <begin position="137"/>
        <end position="160"/>
    </location>
</feature>
<feature type="binding site" evidence="1">
    <location>
        <position position="232"/>
    </location>
    <ligand>
        <name>Zn(2+)</name>
        <dbReference type="ChEBI" id="CHEBI:29105"/>
        <label>1</label>
    </ligand>
</feature>
<feature type="binding site" evidence="1">
    <location>
        <position position="251"/>
    </location>
    <ligand>
        <name>Zn(2+)</name>
        <dbReference type="ChEBI" id="CHEBI:29105"/>
        <label>1</label>
    </ligand>
</feature>
<feature type="binding site" evidence="1">
    <location>
        <position position="255"/>
    </location>
    <ligand>
        <name>Zn(2+)</name>
        <dbReference type="ChEBI" id="CHEBI:29105"/>
        <label>2</label>
    </ligand>
</feature>
<feature type="binding site" evidence="1">
    <location>
        <position position="267"/>
    </location>
    <ligand>
        <name>Zn(2+)</name>
        <dbReference type="ChEBI" id="CHEBI:29105"/>
        <label>2</label>
    </ligand>
</feature>
<feature type="binding site" evidence="1">
    <location>
        <position position="269"/>
    </location>
    <ligand>
        <name>Zn(2+)</name>
        <dbReference type="ChEBI" id="CHEBI:29105"/>
        <label>2</label>
    </ligand>
</feature>
<feature type="binding site" evidence="1">
    <location>
        <position position="272"/>
    </location>
    <ligand>
        <name>Zn(2+)</name>
        <dbReference type="ChEBI" id="CHEBI:29105"/>
        <label>2</label>
    </ligand>
</feature>
<feature type="binding site" evidence="1">
    <location>
        <position position="276"/>
    </location>
    <ligand>
        <name>Zn(2+)</name>
        <dbReference type="ChEBI" id="CHEBI:29105"/>
        <label>1</label>
    </ligand>
</feature>
<feature type="binding site" evidence="1">
    <location>
        <position position="279"/>
    </location>
    <ligand>
        <name>Zn(2+)</name>
        <dbReference type="ChEBI" id="CHEBI:29105"/>
        <label>1</label>
    </ligand>
</feature>
<name>V_RINDK</name>
<comment type="function">
    <text evidence="1 3">Plays an essential role in the inhibition of host immune response. Prevents the establishment of cellular antiviral state by blocking interferon-alpha/beta (IFN-alpha/beta) production and signaling pathway. Interacts with host IFIH1/MDA5 and DHX58/LGP2 to inhibit the transduction pathway involved in the activation of IFN-beta promoter, thus protecting the virus against cell antiviral state. Blocks the type I interferon signaling pathway by interacting with host TYK2 and thereby inhibiting downstream STAT1 and STAT2 phosphorylation (By similarity).</text>
</comment>
<comment type="subunit">
    <text evidence="1">Interacts with host IFIH1/MDA5 and DHX58/LGP2. Interacts with host TYK2; this interaction inhibits the type I interferon signaling pathway (By similarity).</text>
</comment>
<comment type="subcellular location">
    <subcellularLocation>
        <location evidence="1">Host cytoplasm</location>
    </subcellularLocation>
</comment>
<comment type="RNA editing">
    <location>
        <position position="231"/>
    </location>
    <text>Partially edited. RNA editing at this position consists of an insertion of one guanine nucleotide. The sequence displayed here is the V protein, derived from the edited RNA. The unedited RNA gives rise to the P protein (AC P35945).</text>
</comment>
<comment type="miscellaneous">
    <text>Highly virulent strain of Rinderpest virus can blocks the phosphorylation of host JAK1 kinase, thereby blocking the type II interferon signaling as well.</text>
</comment>
<comment type="similarity">
    <text evidence="4">Belongs to the paramyxoviruses V protein family.</text>
</comment>
<sequence length="299" mass="32575">MAEEQAYHVNKGLECIKALRARPLDPLVVEEALAAWVETSEGQTLDRMSSDEAEADHQDISKPCFPAAGPGKSSMSRCHDQGLGGSNSCDEELGAFIGDSSMHSTEVQHYHVYDHSGEKVEGVEDADSILVQSGADDGVEVWGGDEESENSDVDSGEPDPEGSAPADWGSSPISPATRASDVETVEGDEIQKLLEDQSRIRKMTKAGKTLVVPPIPSQERPTASEKPIKKGHRREIDLIWNDGRVFIDRWCNPTCSKVTVGTVRAKCICGECPRVCEQCITDSGIENRIWYHNLADIPE</sequence>
<protein>
    <recommendedName>
        <fullName>Non-structural protein V</fullName>
    </recommendedName>
</protein>
<organismHost>
    <name type="scientific">Bos indicus</name>
    <name type="common">Zebu</name>
    <dbReference type="NCBI Taxonomy" id="9915"/>
</organismHost>
<organismHost>
    <name type="scientific">Bos taurus</name>
    <name type="common">Bovine</name>
    <dbReference type="NCBI Taxonomy" id="9913"/>
</organismHost>
<organismHost>
    <name type="scientific">Bubalus bubalis</name>
    <name type="common">Domestic water buffalo</name>
    <dbReference type="NCBI Taxonomy" id="89462"/>
</organismHost>
<organismHost>
    <name type="scientific">Capra hircus</name>
    <name type="common">Goat</name>
    <dbReference type="NCBI Taxonomy" id="9925"/>
</organismHost>
<organismHost>
    <name type="scientific">Gazella</name>
    <name type="common">gazelles</name>
    <dbReference type="NCBI Taxonomy" id="9933"/>
</organismHost>
<organismHost>
    <name type="scientific">Giraffa camelopardalis</name>
    <name type="common">Giraffe</name>
    <dbReference type="NCBI Taxonomy" id="9894"/>
</organismHost>
<organismHost>
    <name type="scientific">Hippopotamus</name>
    <dbReference type="NCBI Taxonomy" id="9832"/>
</organismHost>
<organismHost>
    <name type="scientific">Ovis aries</name>
    <name type="common">Sheep</name>
    <dbReference type="NCBI Taxonomy" id="9940"/>
</organismHost>
<organismHost>
    <name type="scientific">Suidae</name>
    <name type="common">pigs</name>
    <dbReference type="NCBI Taxonomy" id="9821"/>
</organismHost>
<accession>P60169</accession>